<comment type="cofactor">
    <cofactor evidence="1">
        <name>Mg(2+)</name>
        <dbReference type="ChEBI" id="CHEBI:18420"/>
    </cofactor>
    <text evidence="1">Binds 1 Mg(2+) ion per subunit.</text>
</comment>
<comment type="alternative products">
    <event type="alternative splicing"/>
    <isoform>
        <id>Q3UGR5-1</id>
        <name>1</name>
        <sequence type="displayed"/>
    </isoform>
    <isoform>
        <id>Q3UGR5-2</id>
        <name>2</name>
        <sequence type="described" ref="VSP_025374 VSP_025375"/>
    </isoform>
</comment>
<comment type="similarity">
    <text evidence="5">Belongs to the HAD-like hydrolase superfamily.</text>
</comment>
<comment type="sequence caution" evidence="5">
    <conflict type="frameshift">
        <sequence resource="EMBL-CDS" id="BAB22395"/>
    </conflict>
</comment>
<name>HDHD2_MOUSE</name>
<keyword id="KW-0002">3D-structure</keyword>
<keyword id="KW-0025">Alternative splicing</keyword>
<keyword id="KW-0175">Coiled coil</keyword>
<keyword id="KW-0903">Direct protein sequencing</keyword>
<keyword id="KW-0460">Magnesium</keyword>
<keyword id="KW-0479">Metal-binding</keyword>
<keyword id="KW-1185">Reference proteome</keyword>
<gene>
    <name type="primary">Hdhd2</name>
</gene>
<feature type="chain" id="PRO_0000287204" description="Haloacid dehalogenase-like hydrolase domain-containing protein 2">
    <location>
        <begin position="1"/>
        <end position="259"/>
    </location>
</feature>
<feature type="coiled-coil region" evidence="2">
    <location>
        <begin position="47"/>
        <end position="72"/>
    </location>
</feature>
<feature type="binding site" evidence="1">
    <location>
        <begin position="13"/>
        <end position="15"/>
    </location>
    <ligand>
        <name>substrate</name>
    </ligand>
</feature>
<feature type="binding site" evidence="3">
    <location>
        <position position="13"/>
    </location>
    <ligand>
        <name>Mg(2+)</name>
        <dbReference type="ChEBI" id="CHEBI:18420"/>
    </ligand>
</feature>
<feature type="binding site" evidence="3">
    <location>
        <position position="15"/>
    </location>
    <ligand>
        <name>Mg(2+)</name>
        <dbReference type="ChEBI" id="CHEBI:18420"/>
    </ligand>
</feature>
<feature type="binding site" evidence="1">
    <location>
        <begin position="46"/>
        <end position="47"/>
    </location>
    <ligand>
        <name>substrate</name>
    </ligand>
</feature>
<feature type="binding site">
    <location>
        <position position="179"/>
    </location>
    <ligand>
        <name>substrate</name>
    </ligand>
</feature>
<feature type="binding site" evidence="1">
    <location>
        <position position="204"/>
    </location>
    <ligand>
        <name>Mg(2+)</name>
        <dbReference type="ChEBI" id="CHEBI:18420"/>
    </ligand>
</feature>
<feature type="modified residue" description="N6-succinyllysine" evidence="6">
    <location>
        <position position="50"/>
    </location>
</feature>
<feature type="splice variant" id="VSP_025374" description="In isoform 2." evidence="4">
    <original>LLLDGAPLIAIHK</original>
    <variation>RKQRGQEEENSDSH</variation>
    <location>
        <begin position="133"/>
        <end position="145"/>
    </location>
</feature>
<feature type="splice variant" id="VSP_025375" description="In isoform 2." evidence="4">
    <location>
        <begin position="146"/>
        <end position="259"/>
    </location>
</feature>
<feature type="sequence conflict" description="In Ref. 2; AAH58177." evidence="5" ref="2">
    <original>S</original>
    <variation>T</variation>
    <location>
        <position position="52"/>
    </location>
</feature>
<feature type="sequence conflict" description="In Ref. 1; BAB22395." evidence="5" ref="1">
    <original>L</original>
    <variation>P</variation>
    <location>
        <position position="57"/>
    </location>
</feature>
<feature type="sequence conflict" description="In Ref. 1; BAE28142." evidence="5" ref="1">
    <original>A</original>
    <variation>T</variation>
    <location>
        <position position="146"/>
    </location>
</feature>
<feature type="sequence conflict" description="In Ref. 1; BAB22395." evidence="5" ref="1">
    <original>P</original>
    <variation>S</variation>
    <location>
        <position position="238"/>
    </location>
</feature>
<feature type="strand" evidence="7">
    <location>
        <begin position="9"/>
        <end position="18"/>
    </location>
</feature>
<feature type="helix" evidence="7">
    <location>
        <begin position="28"/>
        <end position="36"/>
    </location>
</feature>
<feature type="strand" evidence="7">
    <location>
        <begin position="41"/>
        <end position="46"/>
    </location>
</feature>
<feature type="helix" evidence="7">
    <location>
        <begin position="53"/>
        <end position="62"/>
    </location>
</feature>
<feature type="helix" evidence="7">
    <location>
        <begin position="69"/>
        <end position="71"/>
    </location>
</feature>
<feature type="strand" evidence="7">
    <location>
        <begin position="72"/>
        <end position="74"/>
    </location>
</feature>
<feature type="helix" evidence="7">
    <location>
        <begin position="75"/>
        <end position="86"/>
    </location>
</feature>
<feature type="strand" evidence="7">
    <location>
        <begin position="90"/>
        <end position="94"/>
    </location>
</feature>
<feature type="helix" evidence="7">
    <location>
        <begin position="96"/>
        <end position="102"/>
    </location>
</feature>
<feature type="strand" evidence="7">
    <location>
        <begin position="112"/>
        <end position="115"/>
    </location>
</feature>
<feature type="helix" evidence="7">
    <location>
        <begin position="119"/>
        <end position="121"/>
    </location>
</feature>
<feature type="helix" evidence="7">
    <location>
        <begin position="124"/>
        <end position="135"/>
    </location>
</feature>
<feature type="strand" evidence="7">
    <location>
        <begin position="140"/>
        <end position="143"/>
    </location>
</feature>
<feature type="strand" evidence="7">
    <location>
        <begin position="147"/>
        <end position="151"/>
    </location>
</feature>
<feature type="strand" evidence="7">
    <location>
        <begin position="154"/>
        <end position="157"/>
    </location>
</feature>
<feature type="helix" evidence="7">
    <location>
        <begin position="160"/>
        <end position="170"/>
    </location>
</feature>
<feature type="helix" evidence="7">
    <location>
        <begin position="182"/>
        <end position="188"/>
    </location>
</feature>
<feature type="helix" evidence="7">
    <location>
        <begin position="189"/>
        <end position="192"/>
    </location>
</feature>
<feature type="helix" evidence="7">
    <location>
        <begin position="196"/>
        <end position="198"/>
    </location>
</feature>
<feature type="strand" evidence="7">
    <location>
        <begin position="199"/>
        <end position="204"/>
    </location>
</feature>
<feature type="turn" evidence="7">
    <location>
        <begin position="206"/>
        <end position="209"/>
    </location>
</feature>
<feature type="helix" evidence="7">
    <location>
        <begin position="210"/>
        <end position="215"/>
    </location>
</feature>
<feature type="strand" evidence="7">
    <location>
        <begin position="219"/>
        <end position="225"/>
    </location>
</feature>
<feature type="helix" evidence="7">
    <location>
        <begin position="232"/>
        <end position="235"/>
    </location>
</feature>
<feature type="strand" evidence="7">
    <location>
        <begin position="236"/>
        <end position="238"/>
    </location>
</feature>
<feature type="strand" evidence="7">
    <location>
        <begin position="241"/>
        <end position="245"/>
    </location>
</feature>
<feature type="helix" evidence="7">
    <location>
        <begin position="247"/>
        <end position="257"/>
    </location>
</feature>
<dbReference type="EMBL" id="AK002837">
    <property type="protein sequence ID" value="BAB22395.1"/>
    <property type="status" value="ALT_FRAME"/>
    <property type="molecule type" value="mRNA"/>
</dbReference>
<dbReference type="EMBL" id="AK014208">
    <property type="protein sequence ID" value="BAB29206.1"/>
    <property type="molecule type" value="mRNA"/>
</dbReference>
<dbReference type="EMBL" id="AK137285">
    <property type="protein sequence ID" value="BAE23293.1"/>
    <property type="molecule type" value="mRNA"/>
</dbReference>
<dbReference type="EMBL" id="AK147794">
    <property type="protein sequence ID" value="BAE28142.1"/>
    <property type="molecule type" value="mRNA"/>
</dbReference>
<dbReference type="EMBL" id="AK151285">
    <property type="protein sequence ID" value="BAE30270.1"/>
    <property type="molecule type" value="mRNA"/>
</dbReference>
<dbReference type="EMBL" id="AK152162">
    <property type="protein sequence ID" value="BAE30997.1"/>
    <property type="molecule type" value="mRNA"/>
</dbReference>
<dbReference type="EMBL" id="AK152259">
    <property type="protein sequence ID" value="BAE31078.1"/>
    <property type="molecule type" value="mRNA"/>
</dbReference>
<dbReference type="EMBL" id="BC058177">
    <property type="protein sequence ID" value="AAH58177.1"/>
    <property type="molecule type" value="mRNA"/>
</dbReference>
<dbReference type="CCDS" id="CCDS37863.1">
    <molecule id="Q3UGR5-1"/>
</dbReference>
<dbReference type="CCDS" id="CCDS37864.1">
    <molecule id="Q3UGR5-2"/>
</dbReference>
<dbReference type="RefSeq" id="NP_001034290.1">
    <molecule id="Q3UGR5-1"/>
    <property type="nucleotide sequence ID" value="NM_001039201.2"/>
</dbReference>
<dbReference type="RefSeq" id="NP_001034291.1">
    <molecule id="Q3UGR5-2"/>
    <property type="nucleotide sequence ID" value="NM_001039202.1"/>
</dbReference>
<dbReference type="RefSeq" id="NP_001348156.1">
    <molecule id="Q3UGR5-1"/>
    <property type="nucleotide sequence ID" value="NM_001361227.1"/>
</dbReference>
<dbReference type="RefSeq" id="NP_084102.1">
    <molecule id="Q3UGR5-1"/>
    <property type="nucleotide sequence ID" value="NM_029826.2"/>
</dbReference>
<dbReference type="RefSeq" id="XP_006526505.1">
    <property type="nucleotide sequence ID" value="XM_006526442.3"/>
</dbReference>
<dbReference type="PDB" id="2HO4">
    <property type="method" value="X-ray"/>
    <property type="resolution" value="2.20 A"/>
    <property type="chains" value="A/B=2-259"/>
</dbReference>
<dbReference type="PDBsum" id="2HO4"/>
<dbReference type="SMR" id="Q3UGR5"/>
<dbReference type="BioGRID" id="218444">
    <property type="interactions" value="6"/>
</dbReference>
<dbReference type="FunCoup" id="Q3UGR5">
    <property type="interactions" value="1418"/>
</dbReference>
<dbReference type="IntAct" id="Q3UGR5">
    <property type="interactions" value="1"/>
</dbReference>
<dbReference type="MINT" id="Q3UGR5"/>
<dbReference type="STRING" id="10090.ENSMUSP00000095129"/>
<dbReference type="iPTMnet" id="Q3UGR5"/>
<dbReference type="PhosphoSitePlus" id="Q3UGR5"/>
<dbReference type="SwissPalm" id="Q3UGR5"/>
<dbReference type="jPOST" id="Q3UGR5"/>
<dbReference type="PaxDb" id="10090-ENSMUSP00000114212"/>
<dbReference type="PeptideAtlas" id="Q3UGR5"/>
<dbReference type="ProteomicsDB" id="269652">
    <molecule id="Q3UGR5-1"/>
</dbReference>
<dbReference type="ProteomicsDB" id="269653">
    <molecule id="Q3UGR5-2"/>
</dbReference>
<dbReference type="Pumba" id="Q3UGR5"/>
<dbReference type="Antibodypedia" id="22539">
    <property type="antibodies" value="263 antibodies from 20 providers"/>
</dbReference>
<dbReference type="DNASU" id="76987"/>
<dbReference type="Ensembl" id="ENSMUST00000026485.15">
    <molecule id="Q3UGR5-1"/>
    <property type="protein sequence ID" value="ENSMUSP00000026485.8"/>
    <property type="gene ID" value="ENSMUSG00000025421.16"/>
</dbReference>
<dbReference type="Ensembl" id="ENSMUST00000097521.12">
    <molecule id="Q3UGR5-2"/>
    <property type="protein sequence ID" value="ENSMUSP00000095128.5"/>
    <property type="gene ID" value="ENSMUSG00000025421.16"/>
</dbReference>
<dbReference type="Ensembl" id="ENSMUST00000097522.11">
    <molecule id="Q3UGR5-1"/>
    <property type="protein sequence ID" value="ENSMUSP00000095129.4"/>
    <property type="gene ID" value="ENSMUSG00000025421.16"/>
</dbReference>
<dbReference type="Ensembl" id="ENSMUST00000145634.9">
    <molecule id="Q3UGR5-1"/>
    <property type="protein sequence ID" value="ENSMUSP00000123320.2"/>
    <property type="gene ID" value="ENSMUSG00000025421.16"/>
</dbReference>
<dbReference type="Ensembl" id="ENSMUST00000148955.3">
    <molecule id="Q3UGR5-1"/>
    <property type="protein sequence ID" value="ENSMUSP00000116243.2"/>
    <property type="gene ID" value="ENSMUSG00000025421.16"/>
</dbReference>
<dbReference type="Ensembl" id="ENSMUST00000150990.9">
    <molecule id="Q3UGR5-1"/>
    <property type="protein sequence ID" value="ENSMUSP00000114212.2"/>
    <property type="gene ID" value="ENSMUSG00000025421.16"/>
</dbReference>
<dbReference type="GeneID" id="76987"/>
<dbReference type="KEGG" id="mmu:76987"/>
<dbReference type="UCSC" id="uc008fqs.1">
    <molecule id="Q3UGR5-2"/>
    <property type="organism name" value="mouse"/>
</dbReference>
<dbReference type="UCSC" id="uc008fqt.1">
    <molecule id="Q3UGR5-1"/>
    <property type="organism name" value="mouse"/>
</dbReference>
<dbReference type="AGR" id="MGI:1924237"/>
<dbReference type="CTD" id="84064"/>
<dbReference type="MGI" id="MGI:1924237">
    <property type="gene designation" value="Hdhd2"/>
</dbReference>
<dbReference type="VEuPathDB" id="HostDB:ENSMUSG00000025421"/>
<dbReference type="eggNOG" id="KOG3040">
    <property type="taxonomic scope" value="Eukaryota"/>
</dbReference>
<dbReference type="GeneTree" id="ENSGT00940000155805"/>
<dbReference type="HOGENOM" id="CLU_043473_4_0_1"/>
<dbReference type="InParanoid" id="Q3UGR5"/>
<dbReference type="OMA" id="RKPIESW"/>
<dbReference type="OrthoDB" id="426235at2759"/>
<dbReference type="PhylomeDB" id="Q3UGR5"/>
<dbReference type="TreeFam" id="TF314344"/>
<dbReference type="BioGRID-ORCS" id="76987">
    <property type="hits" value="0 hits in 77 CRISPR screens"/>
</dbReference>
<dbReference type="ChiTaRS" id="Hdhd2">
    <property type="organism name" value="mouse"/>
</dbReference>
<dbReference type="EvolutionaryTrace" id="Q3UGR5"/>
<dbReference type="PRO" id="PR:Q3UGR5"/>
<dbReference type="Proteomes" id="UP000000589">
    <property type="component" value="Chromosome 18"/>
</dbReference>
<dbReference type="RNAct" id="Q3UGR5">
    <property type="molecule type" value="protein"/>
</dbReference>
<dbReference type="Bgee" id="ENSMUSG00000025421">
    <property type="expression patterns" value="Expressed in right kidney and 162 other cell types or tissues"/>
</dbReference>
<dbReference type="GO" id="GO:0019899">
    <property type="term" value="F:enzyme binding"/>
    <property type="evidence" value="ECO:0000250"/>
    <property type="project" value="CAFA"/>
</dbReference>
<dbReference type="GO" id="GO:0046872">
    <property type="term" value="F:metal ion binding"/>
    <property type="evidence" value="ECO:0007669"/>
    <property type="project" value="UniProtKB-KW"/>
</dbReference>
<dbReference type="GO" id="GO:0016791">
    <property type="term" value="F:phosphatase activity"/>
    <property type="evidence" value="ECO:0007669"/>
    <property type="project" value="InterPro"/>
</dbReference>
<dbReference type="CDD" id="cd07509">
    <property type="entry name" value="HAD_PPase"/>
    <property type="match status" value="1"/>
</dbReference>
<dbReference type="FunFam" id="3.40.50.1000:FF:000452">
    <property type="entry name" value="Haloacid dehalogenase-like hydrolase domain-containing protein 2"/>
    <property type="match status" value="2"/>
</dbReference>
<dbReference type="Gene3D" id="3.40.50.1000">
    <property type="entry name" value="HAD superfamily/HAD-like"/>
    <property type="match status" value="2"/>
</dbReference>
<dbReference type="InterPro" id="IPR036412">
    <property type="entry name" value="HAD-like_sf"/>
</dbReference>
<dbReference type="InterPro" id="IPR006357">
    <property type="entry name" value="HAD-SF_hydro_IIA"/>
</dbReference>
<dbReference type="InterPro" id="IPR023214">
    <property type="entry name" value="HAD_sf"/>
</dbReference>
<dbReference type="InterPro" id="IPR006355">
    <property type="entry name" value="LHPP/HDHD2"/>
</dbReference>
<dbReference type="NCBIfam" id="TIGR01460">
    <property type="entry name" value="HAD-SF-IIA"/>
    <property type="match status" value="1"/>
</dbReference>
<dbReference type="NCBIfam" id="TIGR01458">
    <property type="entry name" value="HAD-SF-IIA-hyp3"/>
    <property type="match status" value="1"/>
</dbReference>
<dbReference type="PANTHER" id="PTHR19288">
    <property type="entry name" value="4-NITROPHENYLPHOSPHATASE-RELATED"/>
    <property type="match status" value="1"/>
</dbReference>
<dbReference type="PANTHER" id="PTHR19288:SF46">
    <property type="entry name" value="HALOACID DEHALOGENASE-LIKE HYDROLASE DOMAIN-CONTAINING PROTEIN 2"/>
    <property type="match status" value="1"/>
</dbReference>
<dbReference type="Pfam" id="PF13344">
    <property type="entry name" value="Hydrolase_6"/>
    <property type="match status" value="1"/>
</dbReference>
<dbReference type="Pfam" id="PF13242">
    <property type="entry name" value="Hydrolase_like"/>
    <property type="match status" value="1"/>
</dbReference>
<dbReference type="SFLD" id="SFLDG01139">
    <property type="entry name" value="C2.A:_Pyridoxal_Phosphate_Phos"/>
    <property type="match status" value="1"/>
</dbReference>
<dbReference type="SFLD" id="SFLDS00003">
    <property type="entry name" value="Haloacid_Dehalogenase"/>
    <property type="match status" value="1"/>
</dbReference>
<dbReference type="SUPFAM" id="SSF56784">
    <property type="entry name" value="HAD-like"/>
    <property type="match status" value="1"/>
</dbReference>
<accession>Q3UGR5</accession>
<accession>Q3U8M0</accession>
<accession>Q6PEB2</accession>
<accession>Q9CXN1</accession>
<accession>Q9DCF2</accession>
<sequence length="259" mass="28730">MAARRALKAVLVDLNGTLHIEDAAVPGAQEALKRLRATSVMVRFVTNTTKESKKDLLERLKKLEFEISEDEIFTSLTAARNLIEQKQVRPMLLVDDRALPEFTGVQTQDPNAVVIGLAPEHFHYQLLNQAFRLLLDGAPLIAIHKARYYKRKDGLALGPGPFVTALEYATDTKAMVVGKPEKTFFLEALRDADCAPEEAVMIGDDCRDDVDGAQNIGMLGILVKTGKYKAADEEKINPPPYLTCESFPHAVDHILQHLL</sequence>
<proteinExistence type="evidence at protein level"/>
<organism>
    <name type="scientific">Mus musculus</name>
    <name type="common">Mouse</name>
    <dbReference type="NCBI Taxonomy" id="10090"/>
    <lineage>
        <taxon>Eukaryota</taxon>
        <taxon>Metazoa</taxon>
        <taxon>Chordata</taxon>
        <taxon>Craniata</taxon>
        <taxon>Vertebrata</taxon>
        <taxon>Euteleostomi</taxon>
        <taxon>Mammalia</taxon>
        <taxon>Eutheria</taxon>
        <taxon>Euarchontoglires</taxon>
        <taxon>Glires</taxon>
        <taxon>Rodentia</taxon>
        <taxon>Myomorpha</taxon>
        <taxon>Muroidea</taxon>
        <taxon>Muridae</taxon>
        <taxon>Murinae</taxon>
        <taxon>Mus</taxon>
        <taxon>Mus</taxon>
    </lineage>
</organism>
<protein>
    <recommendedName>
        <fullName>Haloacid dehalogenase-like hydrolase domain-containing protein 2</fullName>
    </recommendedName>
</protein>
<reference key="1">
    <citation type="journal article" date="2005" name="Science">
        <title>The transcriptional landscape of the mammalian genome.</title>
        <authorList>
            <person name="Carninci P."/>
            <person name="Kasukawa T."/>
            <person name="Katayama S."/>
            <person name="Gough J."/>
            <person name="Frith M.C."/>
            <person name="Maeda N."/>
            <person name="Oyama R."/>
            <person name="Ravasi T."/>
            <person name="Lenhard B."/>
            <person name="Wells C."/>
            <person name="Kodzius R."/>
            <person name="Shimokawa K."/>
            <person name="Bajic V.B."/>
            <person name="Brenner S.E."/>
            <person name="Batalov S."/>
            <person name="Forrest A.R."/>
            <person name="Zavolan M."/>
            <person name="Davis M.J."/>
            <person name="Wilming L.G."/>
            <person name="Aidinis V."/>
            <person name="Allen J.E."/>
            <person name="Ambesi-Impiombato A."/>
            <person name="Apweiler R."/>
            <person name="Aturaliya R.N."/>
            <person name="Bailey T.L."/>
            <person name="Bansal M."/>
            <person name="Baxter L."/>
            <person name="Beisel K.W."/>
            <person name="Bersano T."/>
            <person name="Bono H."/>
            <person name="Chalk A.M."/>
            <person name="Chiu K.P."/>
            <person name="Choudhary V."/>
            <person name="Christoffels A."/>
            <person name="Clutterbuck D.R."/>
            <person name="Crowe M.L."/>
            <person name="Dalla E."/>
            <person name="Dalrymple B.P."/>
            <person name="de Bono B."/>
            <person name="Della Gatta G."/>
            <person name="di Bernardo D."/>
            <person name="Down T."/>
            <person name="Engstrom P."/>
            <person name="Fagiolini M."/>
            <person name="Faulkner G."/>
            <person name="Fletcher C.F."/>
            <person name="Fukushima T."/>
            <person name="Furuno M."/>
            <person name="Futaki S."/>
            <person name="Gariboldi M."/>
            <person name="Georgii-Hemming P."/>
            <person name="Gingeras T.R."/>
            <person name="Gojobori T."/>
            <person name="Green R.E."/>
            <person name="Gustincich S."/>
            <person name="Harbers M."/>
            <person name="Hayashi Y."/>
            <person name="Hensch T.K."/>
            <person name="Hirokawa N."/>
            <person name="Hill D."/>
            <person name="Huminiecki L."/>
            <person name="Iacono M."/>
            <person name="Ikeo K."/>
            <person name="Iwama A."/>
            <person name="Ishikawa T."/>
            <person name="Jakt M."/>
            <person name="Kanapin A."/>
            <person name="Katoh M."/>
            <person name="Kawasawa Y."/>
            <person name="Kelso J."/>
            <person name="Kitamura H."/>
            <person name="Kitano H."/>
            <person name="Kollias G."/>
            <person name="Krishnan S.P."/>
            <person name="Kruger A."/>
            <person name="Kummerfeld S.K."/>
            <person name="Kurochkin I.V."/>
            <person name="Lareau L.F."/>
            <person name="Lazarevic D."/>
            <person name="Lipovich L."/>
            <person name="Liu J."/>
            <person name="Liuni S."/>
            <person name="McWilliam S."/>
            <person name="Madan Babu M."/>
            <person name="Madera M."/>
            <person name="Marchionni L."/>
            <person name="Matsuda H."/>
            <person name="Matsuzawa S."/>
            <person name="Miki H."/>
            <person name="Mignone F."/>
            <person name="Miyake S."/>
            <person name="Morris K."/>
            <person name="Mottagui-Tabar S."/>
            <person name="Mulder N."/>
            <person name="Nakano N."/>
            <person name="Nakauchi H."/>
            <person name="Ng P."/>
            <person name="Nilsson R."/>
            <person name="Nishiguchi S."/>
            <person name="Nishikawa S."/>
            <person name="Nori F."/>
            <person name="Ohara O."/>
            <person name="Okazaki Y."/>
            <person name="Orlando V."/>
            <person name="Pang K.C."/>
            <person name="Pavan W.J."/>
            <person name="Pavesi G."/>
            <person name="Pesole G."/>
            <person name="Petrovsky N."/>
            <person name="Piazza S."/>
            <person name="Reed J."/>
            <person name="Reid J.F."/>
            <person name="Ring B.Z."/>
            <person name="Ringwald M."/>
            <person name="Rost B."/>
            <person name="Ruan Y."/>
            <person name="Salzberg S.L."/>
            <person name="Sandelin A."/>
            <person name="Schneider C."/>
            <person name="Schoenbach C."/>
            <person name="Sekiguchi K."/>
            <person name="Semple C.A."/>
            <person name="Seno S."/>
            <person name="Sessa L."/>
            <person name="Sheng Y."/>
            <person name="Shibata Y."/>
            <person name="Shimada H."/>
            <person name="Shimada K."/>
            <person name="Silva D."/>
            <person name="Sinclair B."/>
            <person name="Sperling S."/>
            <person name="Stupka E."/>
            <person name="Sugiura K."/>
            <person name="Sultana R."/>
            <person name="Takenaka Y."/>
            <person name="Taki K."/>
            <person name="Tammoja K."/>
            <person name="Tan S.L."/>
            <person name="Tang S."/>
            <person name="Taylor M.S."/>
            <person name="Tegner J."/>
            <person name="Teichmann S.A."/>
            <person name="Ueda H.R."/>
            <person name="van Nimwegen E."/>
            <person name="Verardo R."/>
            <person name="Wei C.L."/>
            <person name="Yagi K."/>
            <person name="Yamanishi H."/>
            <person name="Zabarovsky E."/>
            <person name="Zhu S."/>
            <person name="Zimmer A."/>
            <person name="Hide W."/>
            <person name="Bult C."/>
            <person name="Grimmond S.M."/>
            <person name="Teasdale R.D."/>
            <person name="Liu E.T."/>
            <person name="Brusic V."/>
            <person name="Quackenbush J."/>
            <person name="Wahlestedt C."/>
            <person name="Mattick J.S."/>
            <person name="Hume D.A."/>
            <person name="Kai C."/>
            <person name="Sasaki D."/>
            <person name="Tomaru Y."/>
            <person name="Fukuda S."/>
            <person name="Kanamori-Katayama M."/>
            <person name="Suzuki M."/>
            <person name="Aoki J."/>
            <person name="Arakawa T."/>
            <person name="Iida J."/>
            <person name="Imamura K."/>
            <person name="Itoh M."/>
            <person name="Kato T."/>
            <person name="Kawaji H."/>
            <person name="Kawagashira N."/>
            <person name="Kawashima T."/>
            <person name="Kojima M."/>
            <person name="Kondo S."/>
            <person name="Konno H."/>
            <person name="Nakano K."/>
            <person name="Ninomiya N."/>
            <person name="Nishio T."/>
            <person name="Okada M."/>
            <person name="Plessy C."/>
            <person name="Shibata K."/>
            <person name="Shiraki T."/>
            <person name="Suzuki S."/>
            <person name="Tagami M."/>
            <person name="Waki K."/>
            <person name="Watahiki A."/>
            <person name="Okamura-Oho Y."/>
            <person name="Suzuki H."/>
            <person name="Kawai J."/>
            <person name="Hayashizaki Y."/>
        </authorList>
    </citation>
    <scope>NUCLEOTIDE SEQUENCE [LARGE SCALE MRNA] (ISOFORMS 1 AND 2)</scope>
    <source>
        <strain>C57BL/6J</strain>
        <tissue>Bone marrow</tissue>
        <tissue>Head</tissue>
        <tissue>Kidney</tissue>
        <tissue>Melanocyte</tissue>
        <tissue>Urinary bladder</tissue>
    </source>
</reference>
<reference key="2">
    <citation type="journal article" date="2004" name="Genome Res.">
        <title>The status, quality, and expansion of the NIH full-length cDNA project: the Mammalian Gene Collection (MGC).</title>
        <authorList>
            <consortium name="The MGC Project Team"/>
        </authorList>
    </citation>
    <scope>NUCLEOTIDE SEQUENCE [LARGE SCALE MRNA] (ISOFORM 1)</scope>
    <source>
        <tissue>Mammary tumor</tissue>
    </source>
</reference>
<reference key="3">
    <citation type="submission" date="2007-03" db="UniProtKB">
        <authorList>
            <person name="Lubec G."/>
            <person name="Klug S."/>
        </authorList>
    </citation>
    <scope>PROTEIN SEQUENCE OF 9-33; 63-80 AND 183-190</scope>
    <scope>IDENTIFICATION BY MASS SPECTROMETRY</scope>
    <source>
        <tissue>Hippocampus</tissue>
    </source>
</reference>
<reference key="4">
    <citation type="journal article" date="2010" name="Cell">
        <title>A tissue-specific atlas of mouse protein phosphorylation and expression.</title>
        <authorList>
            <person name="Huttlin E.L."/>
            <person name="Jedrychowski M.P."/>
            <person name="Elias J.E."/>
            <person name="Goswami T."/>
            <person name="Rad R."/>
            <person name="Beausoleil S.A."/>
            <person name="Villen J."/>
            <person name="Haas W."/>
            <person name="Sowa M.E."/>
            <person name="Gygi S.P."/>
        </authorList>
    </citation>
    <scope>IDENTIFICATION BY MASS SPECTROMETRY [LARGE SCALE ANALYSIS]</scope>
    <source>
        <tissue>Brain</tissue>
        <tissue>Brown adipose tissue</tissue>
        <tissue>Heart</tissue>
        <tissue>Kidney</tissue>
        <tissue>Liver</tissue>
        <tissue>Lung</tissue>
        <tissue>Pancreas</tissue>
        <tissue>Spleen</tissue>
        <tissue>Testis</tissue>
    </source>
</reference>
<reference key="5">
    <citation type="journal article" date="2013" name="Mol. Cell">
        <title>SIRT5-mediated lysine desuccinylation impacts diverse metabolic pathways.</title>
        <authorList>
            <person name="Park J."/>
            <person name="Chen Y."/>
            <person name="Tishkoff D.X."/>
            <person name="Peng C."/>
            <person name="Tan M."/>
            <person name="Dai L."/>
            <person name="Xie Z."/>
            <person name="Zhang Y."/>
            <person name="Zwaans B.M."/>
            <person name="Skinner M.E."/>
            <person name="Lombard D.B."/>
            <person name="Zhao Y."/>
        </authorList>
    </citation>
    <scope>SUCCINYLATION [LARGE SCALE ANALYSIS] AT LYS-50</scope>
    <scope>IDENTIFICATION BY MASS SPECTROMETRY [LARGE SCALE ANALYSIS]</scope>
    <source>
        <tissue>Liver</tissue>
    </source>
</reference>
<reference key="6">
    <citation type="submission" date="2006-08" db="PDB data bank">
        <title>Crystal structure of protein from mouse mm.236127.</title>
        <authorList>
            <consortium name="Center for eukaryotic structural genomics (CESG)"/>
        </authorList>
    </citation>
    <scope>X-RAY CRYSTALLOGRAPHY (2.2 ANGSTROMS) OF 2-259 IN COMPLEX WITH MAGNESIUM AND PHOSPHATE IONS</scope>
</reference>
<evidence type="ECO:0000250" key="1"/>
<evidence type="ECO:0000255" key="2"/>
<evidence type="ECO:0000269" key="3">
    <source ref="6"/>
</evidence>
<evidence type="ECO:0000303" key="4">
    <source>
    </source>
</evidence>
<evidence type="ECO:0000305" key="5"/>
<evidence type="ECO:0007744" key="6">
    <source>
    </source>
</evidence>
<evidence type="ECO:0007829" key="7">
    <source>
        <dbReference type="PDB" id="2HO4"/>
    </source>
</evidence>